<organism>
    <name type="scientific">Emericella nidulans (strain FGSC A4 / ATCC 38163 / CBS 112.46 / NRRL 194 / M139)</name>
    <name type="common">Aspergillus nidulans</name>
    <dbReference type="NCBI Taxonomy" id="227321"/>
    <lineage>
        <taxon>Eukaryota</taxon>
        <taxon>Fungi</taxon>
        <taxon>Dikarya</taxon>
        <taxon>Ascomycota</taxon>
        <taxon>Pezizomycotina</taxon>
        <taxon>Eurotiomycetes</taxon>
        <taxon>Eurotiomycetidae</taxon>
        <taxon>Eurotiales</taxon>
        <taxon>Aspergillaceae</taxon>
        <taxon>Aspergillus</taxon>
        <taxon>Aspergillus subgen. Nidulantes</taxon>
    </lineage>
</organism>
<accession>Q5B4D1</accession>
<accession>C8V7U0</accession>
<gene>
    <name type="primary">grc3</name>
    <name type="ORF">AN4599</name>
</gene>
<dbReference type="EC" id="2.7.1.-"/>
<dbReference type="EMBL" id="AACD01000079">
    <property type="protein sequence ID" value="EAA60401.1"/>
    <property type="molecule type" value="Genomic_DNA"/>
</dbReference>
<dbReference type="EMBL" id="BN001303">
    <property type="protein sequence ID" value="CBF77175.1"/>
    <property type="molecule type" value="Genomic_DNA"/>
</dbReference>
<dbReference type="RefSeq" id="XP_662203.1">
    <property type="nucleotide sequence ID" value="XM_657111.1"/>
</dbReference>
<dbReference type="SMR" id="Q5B4D1"/>
<dbReference type="FunCoup" id="Q5B4D1">
    <property type="interactions" value="144"/>
</dbReference>
<dbReference type="STRING" id="227321.Q5B4D1"/>
<dbReference type="EnsemblFungi" id="CBF77175">
    <property type="protein sequence ID" value="CBF77175"/>
    <property type="gene ID" value="ANIA_04599"/>
</dbReference>
<dbReference type="KEGG" id="ani:ANIA_04599"/>
<dbReference type="VEuPathDB" id="FungiDB:AN4599"/>
<dbReference type="eggNOG" id="KOG2750">
    <property type="taxonomic scope" value="Eukaryota"/>
</dbReference>
<dbReference type="HOGENOM" id="CLU_010345_1_2_1"/>
<dbReference type="InParanoid" id="Q5B4D1"/>
<dbReference type="OMA" id="PEFAPMG"/>
<dbReference type="OrthoDB" id="4054781at2759"/>
<dbReference type="Proteomes" id="UP000000560">
    <property type="component" value="Chromosome III"/>
</dbReference>
<dbReference type="GO" id="GO:0005730">
    <property type="term" value="C:nucleolus"/>
    <property type="evidence" value="ECO:0007669"/>
    <property type="project" value="UniProtKB-SubCell"/>
</dbReference>
<dbReference type="GO" id="GO:0005634">
    <property type="term" value="C:nucleus"/>
    <property type="evidence" value="ECO:0000318"/>
    <property type="project" value="GO_Central"/>
</dbReference>
<dbReference type="GO" id="GO:0005524">
    <property type="term" value="F:ATP binding"/>
    <property type="evidence" value="ECO:0007669"/>
    <property type="project" value="UniProtKB-KW"/>
</dbReference>
<dbReference type="GO" id="GO:0051731">
    <property type="term" value="F:polynucleotide 5'-hydroxyl-kinase activity"/>
    <property type="evidence" value="ECO:0000250"/>
    <property type="project" value="UniProtKB"/>
</dbReference>
<dbReference type="GO" id="GO:0000448">
    <property type="term" value="P:cleavage in ITS2 between 5.8S rRNA and LSU-rRNA of tricistronic rRNA transcript (SSU-rRNA, 5.8S rRNA, LSU-rRNA)"/>
    <property type="evidence" value="ECO:0000318"/>
    <property type="project" value="GO_Central"/>
</dbReference>
<dbReference type="GO" id="GO:0006364">
    <property type="term" value="P:rRNA processing"/>
    <property type="evidence" value="ECO:0000250"/>
    <property type="project" value="UniProtKB"/>
</dbReference>
<dbReference type="FunFam" id="3.40.50.300:FF:001156">
    <property type="entry name" value="Polynucleotide 5-hydroxyl-kinase grc3"/>
    <property type="match status" value="1"/>
</dbReference>
<dbReference type="Gene3D" id="3.40.50.300">
    <property type="entry name" value="P-loop containing nucleotide triphosphate hydrolases"/>
    <property type="match status" value="1"/>
</dbReference>
<dbReference type="InterPro" id="IPR045116">
    <property type="entry name" value="Clp1/Grc3"/>
</dbReference>
<dbReference type="InterPro" id="IPR032319">
    <property type="entry name" value="CLP1_P"/>
</dbReference>
<dbReference type="InterPro" id="IPR027417">
    <property type="entry name" value="P-loop_NTPase"/>
</dbReference>
<dbReference type="PANTHER" id="PTHR12755">
    <property type="entry name" value="CLEAVAGE/POLYADENYLATION FACTOR IA SUBUNIT CLP1P"/>
    <property type="match status" value="1"/>
</dbReference>
<dbReference type="PANTHER" id="PTHR12755:SF3">
    <property type="entry name" value="POLYNUCLEOTIDE 5'-HYDROXYL-KINASE NOL9"/>
    <property type="match status" value="1"/>
</dbReference>
<dbReference type="Pfam" id="PF16575">
    <property type="entry name" value="CLP1_P"/>
    <property type="match status" value="1"/>
</dbReference>
<name>GRC3_EMENI</name>
<keyword id="KW-0067">ATP-binding</keyword>
<keyword id="KW-0418">Kinase</keyword>
<keyword id="KW-0547">Nucleotide-binding</keyword>
<keyword id="KW-0539">Nucleus</keyword>
<keyword id="KW-1185">Reference proteome</keyword>
<keyword id="KW-0698">rRNA processing</keyword>
<keyword id="KW-0808">Transferase</keyword>
<protein>
    <recommendedName>
        <fullName>Polynucleotide 5'-hydroxyl-kinase grc3</fullName>
        <ecNumber>2.7.1.-</ecNumber>
    </recommendedName>
</protein>
<evidence type="ECO:0000250" key="1"/>
<evidence type="ECO:0000255" key="2"/>
<evidence type="ECO:0000256" key="3">
    <source>
        <dbReference type="SAM" id="MobiDB-lite"/>
    </source>
</evidence>
<evidence type="ECO:0000305" key="4"/>
<comment type="function">
    <text evidence="1">Polynucleotide 5'-kinase involved in rRNA processing.</text>
</comment>
<comment type="subcellular location">
    <subcellularLocation>
        <location evidence="1">Nucleus</location>
        <location evidence="1">Nucleolus</location>
    </subcellularLocation>
</comment>
<comment type="similarity">
    <text evidence="4">Belongs to the Clp1 family. NOL9/GRC3 subfamily.</text>
</comment>
<proteinExistence type="inferred from homology"/>
<reference key="1">
    <citation type="journal article" date="2005" name="Nature">
        <title>Sequencing of Aspergillus nidulans and comparative analysis with A. fumigatus and A. oryzae.</title>
        <authorList>
            <person name="Galagan J.E."/>
            <person name="Calvo S.E."/>
            <person name="Cuomo C."/>
            <person name="Ma L.-J."/>
            <person name="Wortman J.R."/>
            <person name="Batzoglou S."/>
            <person name="Lee S.-I."/>
            <person name="Bastuerkmen M."/>
            <person name="Spevak C.C."/>
            <person name="Clutterbuck J."/>
            <person name="Kapitonov V."/>
            <person name="Jurka J."/>
            <person name="Scazzocchio C."/>
            <person name="Farman M.L."/>
            <person name="Butler J."/>
            <person name="Purcell S."/>
            <person name="Harris S."/>
            <person name="Braus G.H."/>
            <person name="Draht O."/>
            <person name="Busch S."/>
            <person name="D'Enfert C."/>
            <person name="Bouchier C."/>
            <person name="Goldman G.H."/>
            <person name="Bell-Pedersen D."/>
            <person name="Griffiths-Jones S."/>
            <person name="Doonan J.H."/>
            <person name="Yu J."/>
            <person name="Vienken K."/>
            <person name="Pain A."/>
            <person name="Freitag M."/>
            <person name="Selker E.U."/>
            <person name="Archer D.B."/>
            <person name="Penalva M.A."/>
            <person name="Oakley B.R."/>
            <person name="Momany M."/>
            <person name="Tanaka T."/>
            <person name="Kumagai T."/>
            <person name="Asai K."/>
            <person name="Machida M."/>
            <person name="Nierman W.C."/>
            <person name="Denning D.W."/>
            <person name="Caddick M.X."/>
            <person name="Hynes M."/>
            <person name="Paoletti M."/>
            <person name="Fischer R."/>
            <person name="Miller B.L."/>
            <person name="Dyer P.S."/>
            <person name="Sachs M.S."/>
            <person name="Osmani S.A."/>
            <person name="Birren B.W."/>
        </authorList>
    </citation>
    <scope>NUCLEOTIDE SEQUENCE [LARGE SCALE GENOMIC DNA]</scope>
    <source>
        <strain>FGSC A4 / ATCC 38163 / CBS 112.46 / NRRL 194 / M139</strain>
    </source>
</reference>
<reference key="2">
    <citation type="journal article" date="2009" name="Fungal Genet. Biol.">
        <title>The 2008 update of the Aspergillus nidulans genome annotation: a community effort.</title>
        <authorList>
            <person name="Wortman J.R."/>
            <person name="Gilsenan J.M."/>
            <person name="Joardar V."/>
            <person name="Deegan J."/>
            <person name="Clutterbuck J."/>
            <person name="Andersen M.R."/>
            <person name="Archer D."/>
            <person name="Bencina M."/>
            <person name="Braus G."/>
            <person name="Coutinho P."/>
            <person name="von Dohren H."/>
            <person name="Doonan J."/>
            <person name="Driessen A.J."/>
            <person name="Durek P."/>
            <person name="Espeso E."/>
            <person name="Fekete E."/>
            <person name="Flipphi M."/>
            <person name="Estrada C.G."/>
            <person name="Geysens S."/>
            <person name="Goldman G."/>
            <person name="de Groot P.W."/>
            <person name="Hansen K."/>
            <person name="Harris S.D."/>
            <person name="Heinekamp T."/>
            <person name="Helmstaedt K."/>
            <person name="Henrissat B."/>
            <person name="Hofmann G."/>
            <person name="Homan T."/>
            <person name="Horio T."/>
            <person name="Horiuchi H."/>
            <person name="James S."/>
            <person name="Jones M."/>
            <person name="Karaffa L."/>
            <person name="Karanyi Z."/>
            <person name="Kato M."/>
            <person name="Keller N."/>
            <person name="Kelly D.E."/>
            <person name="Kiel J.A."/>
            <person name="Kim J.M."/>
            <person name="van der Klei I.J."/>
            <person name="Klis F.M."/>
            <person name="Kovalchuk A."/>
            <person name="Krasevec N."/>
            <person name="Kubicek C.P."/>
            <person name="Liu B."/>
            <person name="Maccabe A."/>
            <person name="Meyer V."/>
            <person name="Mirabito P."/>
            <person name="Miskei M."/>
            <person name="Mos M."/>
            <person name="Mullins J."/>
            <person name="Nelson D.R."/>
            <person name="Nielsen J."/>
            <person name="Oakley B.R."/>
            <person name="Osmani S.A."/>
            <person name="Pakula T."/>
            <person name="Paszewski A."/>
            <person name="Paulsen I."/>
            <person name="Pilsyk S."/>
            <person name="Pocsi I."/>
            <person name="Punt P.J."/>
            <person name="Ram A.F."/>
            <person name="Ren Q."/>
            <person name="Robellet X."/>
            <person name="Robson G."/>
            <person name="Seiboth B."/>
            <person name="van Solingen P."/>
            <person name="Specht T."/>
            <person name="Sun J."/>
            <person name="Taheri-Talesh N."/>
            <person name="Takeshita N."/>
            <person name="Ussery D."/>
            <person name="vanKuyk P.A."/>
            <person name="Visser H."/>
            <person name="van de Vondervoort P.J."/>
            <person name="de Vries R.P."/>
            <person name="Walton J."/>
            <person name="Xiang X."/>
            <person name="Xiong Y."/>
            <person name="Zeng A.P."/>
            <person name="Brandt B.W."/>
            <person name="Cornell M.J."/>
            <person name="van den Hondel C.A."/>
            <person name="Visser J."/>
            <person name="Oliver S.G."/>
            <person name="Turner G."/>
        </authorList>
    </citation>
    <scope>GENOME REANNOTATION</scope>
    <source>
        <strain>FGSC A4 / ATCC 38163 / CBS 112.46 / NRRL 194 / M139</strain>
    </source>
</reference>
<sequence length="816" mass="89980">MMKRKADRQTAAAAPVSAFAARKARLQQTQTQVQTVVASEKTTHTDVAAEPPSKRPRRSLQESQAQSTSEEDTKRTSKRSAAKTEKVQRVDSGTITRTRETRMKDSEIEVEDLEKERSSNEESEGEDAVEENAAGVVAVPAAEDGYESPADNTMTVVFPLSKIRLNKNNIVYSDEDTLCVRIQEKLSIVLIGQYDLWVKRGVVSVMGAKLHPSPRVYRVYAPSTHSLPVIKCVTGVNGAAEVEFKSCHSGITRLRDLSPLYQRLWNSGNTPADKLSLKAVGQDARRTFSVLHTSADDPLKRHLRPLHLEKQWSAAIKVLSQRAGRLQVLICGPKASGKSTFGRYLLNHLLSPAPQPELNYTNTDGVAFLDLDPGQPEFLPMGQVYLAHLRSPVFGPPFTHPSLNNEREGTIIRAHHIGATSPKEDPDHYVLAAANLMEQYRTLLATYPQCPLIINYPGWIFGLGLEVATYLIQSLGLSDVVYMSEKGPTEVVEPLSQAASLARVSLTILPSQPTEFVSRSSAQLRSMQMQSYFHMAQPAGVSHPTWLENPVSKNRPFRVRYAGENRGVHGVMTLDSQIIPDLLCESLEGALVGVVAIESPNALPIPSSNAPPANEEEATSNADDDVDMENETEHNRNATISHLTTLTISTKESLPYITSGPGTSTPLHPSSSSMLGLALIRSINPDTQTLDLVTPIPSTRLIQSLERGHALVLVRGVLDNPNWAVAEEYYAARAEERRVRRGIRGRKEAGVGEQGDESVEQRLLGLLKERIRRAKDVPFMTVVEDHGRRKQEEAAQRALWKLRKKAGIESEDEVGY</sequence>
<feature type="chain" id="PRO_0000289955" description="Polynucleotide 5'-hydroxyl-kinase grc3">
    <location>
        <begin position="1"/>
        <end position="816"/>
    </location>
</feature>
<feature type="region of interest" description="Disordered" evidence="3">
    <location>
        <begin position="1"/>
        <end position="132"/>
    </location>
</feature>
<feature type="region of interest" description="Disordered" evidence="3">
    <location>
        <begin position="603"/>
        <end position="626"/>
    </location>
</feature>
<feature type="compositionally biased region" description="Low complexity" evidence="3">
    <location>
        <begin position="11"/>
        <end position="37"/>
    </location>
</feature>
<feature type="compositionally biased region" description="Basic and acidic residues" evidence="3">
    <location>
        <begin position="97"/>
        <end position="107"/>
    </location>
</feature>
<feature type="compositionally biased region" description="Acidic residues" evidence="3">
    <location>
        <begin position="121"/>
        <end position="130"/>
    </location>
</feature>
<feature type="compositionally biased region" description="Acidic residues" evidence="3">
    <location>
        <begin position="614"/>
        <end position="626"/>
    </location>
</feature>
<feature type="binding site" evidence="2">
    <location>
        <begin position="332"/>
        <end position="339"/>
    </location>
    <ligand>
        <name>ATP</name>
        <dbReference type="ChEBI" id="CHEBI:30616"/>
    </ligand>
</feature>